<comment type="function">
    <text evidence="1">Catalyzes the conversion of pppGpp to ppGpp. Guanosine pentaphosphate (pppGpp) is a cytoplasmic signaling molecule which together with ppGpp controls the 'stringent response', an adaptive process that allows bacteria to respond to amino acid starvation, resulting in the coordinated regulation of numerous cellular activities.</text>
</comment>
<comment type="catalytic activity">
    <reaction evidence="1">
        <text>guanosine 3'-diphosphate 5'-triphosphate + H2O = guanosine 3',5'-bis(diphosphate) + phosphate + H(+)</text>
        <dbReference type="Rhea" id="RHEA:13073"/>
        <dbReference type="ChEBI" id="CHEBI:15377"/>
        <dbReference type="ChEBI" id="CHEBI:15378"/>
        <dbReference type="ChEBI" id="CHEBI:43474"/>
        <dbReference type="ChEBI" id="CHEBI:77828"/>
        <dbReference type="ChEBI" id="CHEBI:142410"/>
        <dbReference type="EC" id="3.6.1.40"/>
    </reaction>
</comment>
<comment type="pathway">
    <text evidence="1">Purine metabolism; ppGpp biosynthesis; ppGpp from GTP: step 2/2.</text>
</comment>
<comment type="similarity">
    <text evidence="1">Belongs to the GppA/Ppx family. GppA subfamily.</text>
</comment>
<protein>
    <recommendedName>
        <fullName evidence="1">Guanosine-5'-triphosphate,3'-diphosphate pyrophosphatase</fullName>
        <ecNumber evidence="1">3.6.1.40</ecNumber>
    </recommendedName>
    <alternativeName>
        <fullName evidence="1">Guanosine pentaphosphate phosphohydrolase</fullName>
    </alternativeName>
    <alternativeName>
        <fullName evidence="1">pppGpp-5'-phosphohydrolase</fullName>
    </alternativeName>
</protein>
<feature type="chain" id="PRO_1000146872" description="Guanosine-5'-triphosphate,3'-diphosphate pyrophosphatase">
    <location>
        <begin position="1"/>
        <end position="494"/>
    </location>
</feature>
<keyword id="KW-0378">Hydrolase</keyword>
<keyword id="KW-1185">Reference proteome</keyword>
<evidence type="ECO:0000255" key="1">
    <source>
        <dbReference type="HAMAP-Rule" id="MF_01550"/>
    </source>
</evidence>
<reference key="1">
    <citation type="journal article" date="2008" name="Environ. Microbiol.">
        <title>The genome of Erwinia tasmaniensis strain Et1/99, a non-pathogenic bacterium in the genus Erwinia.</title>
        <authorList>
            <person name="Kube M."/>
            <person name="Migdoll A.M."/>
            <person name="Mueller I."/>
            <person name="Kuhl H."/>
            <person name="Beck A."/>
            <person name="Reinhardt R."/>
            <person name="Geider K."/>
        </authorList>
    </citation>
    <scope>NUCLEOTIDE SEQUENCE [LARGE SCALE GENOMIC DNA]</scope>
    <source>
        <strain>DSM 17950 / CFBP 7177 / CIP 109463 / NCPPB 4357 / Et1/99</strain>
    </source>
</reference>
<organism>
    <name type="scientific">Erwinia tasmaniensis (strain DSM 17950 / CFBP 7177 / CIP 109463 / NCPPB 4357 / Et1/99)</name>
    <dbReference type="NCBI Taxonomy" id="465817"/>
    <lineage>
        <taxon>Bacteria</taxon>
        <taxon>Pseudomonadati</taxon>
        <taxon>Pseudomonadota</taxon>
        <taxon>Gammaproteobacteria</taxon>
        <taxon>Enterobacterales</taxon>
        <taxon>Erwiniaceae</taxon>
        <taxon>Erwinia</taxon>
    </lineage>
</organism>
<dbReference type="EC" id="3.6.1.40" evidence="1"/>
<dbReference type="EMBL" id="CU468135">
    <property type="protein sequence ID" value="CAO95239.1"/>
    <property type="molecule type" value="Genomic_DNA"/>
</dbReference>
<dbReference type="RefSeq" id="WP_012439959.1">
    <property type="nucleotide sequence ID" value="NC_010694.1"/>
</dbReference>
<dbReference type="SMR" id="B2VG72"/>
<dbReference type="STRING" id="465817.ETA_01930"/>
<dbReference type="KEGG" id="eta:ETA_01930"/>
<dbReference type="eggNOG" id="COG0248">
    <property type="taxonomic scope" value="Bacteria"/>
</dbReference>
<dbReference type="HOGENOM" id="CLU_025908_4_0_6"/>
<dbReference type="OrthoDB" id="9793035at2"/>
<dbReference type="UniPathway" id="UPA00908">
    <property type="reaction ID" value="UER00885"/>
</dbReference>
<dbReference type="Proteomes" id="UP000001726">
    <property type="component" value="Chromosome"/>
</dbReference>
<dbReference type="GO" id="GO:0004309">
    <property type="term" value="F:exopolyphosphatase activity"/>
    <property type="evidence" value="ECO:0007669"/>
    <property type="project" value="InterPro"/>
</dbReference>
<dbReference type="GO" id="GO:0008894">
    <property type="term" value="F:guanosine-5'-triphosphate,3'-diphosphate diphosphatase activity"/>
    <property type="evidence" value="ECO:0007669"/>
    <property type="project" value="UniProtKB-UniRule"/>
</dbReference>
<dbReference type="GO" id="GO:0015974">
    <property type="term" value="P:guanosine pentaphosphate catabolic process"/>
    <property type="evidence" value="ECO:0007669"/>
    <property type="project" value="InterPro"/>
</dbReference>
<dbReference type="GO" id="GO:0015970">
    <property type="term" value="P:guanosine tetraphosphate biosynthetic process"/>
    <property type="evidence" value="ECO:0007669"/>
    <property type="project" value="UniProtKB-UniRule"/>
</dbReference>
<dbReference type="GO" id="GO:0015949">
    <property type="term" value="P:nucleobase-containing small molecule interconversion"/>
    <property type="evidence" value="ECO:0007669"/>
    <property type="project" value="TreeGrafter"/>
</dbReference>
<dbReference type="FunFam" id="1.10.3210.10:FF:000004">
    <property type="entry name" value="Guanosine-5'-triphosphate,3'-diphosphate pyrophosphatase"/>
    <property type="match status" value="1"/>
</dbReference>
<dbReference type="FunFam" id="3.30.420.150:FF:000001">
    <property type="entry name" value="Guanosine-5'-triphosphate,3'-diphosphate pyrophosphatase"/>
    <property type="match status" value="1"/>
</dbReference>
<dbReference type="FunFam" id="3.30.420.40:FF:000023">
    <property type="entry name" value="Guanosine-5'-triphosphate,3'-diphosphate pyrophosphatase"/>
    <property type="match status" value="1"/>
</dbReference>
<dbReference type="Gene3D" id="3.30.420.40">
    <property type="match status" value="1"/>
</dbReference>
<dbReference type="Gene3D" id="3.30.420.150">
    <property type="entry name" value="Exopolyphosphatase. Domain 2"/>
    <property type="match status" value="1"/>
</dbReference>
<dbReference type="Gene3D" id="1.10.3210.10">
    <property type="entry name" value="Hypothetical protein af1432"/>
    <property type="match status" value="1"/>
</dbReference>
<dbReference type="HAMAP" id="MF_01550">
    <property type="entry name" value="GppA"/>
    <property type="match status" value="1"/>
</dbReference>
<dbReference type="InterPro" id="IPR043129">
    <property type="entry name" value="ATPase_NBD"/>
</dbReference>
<dbReference type="InterPro" id="IPR022371">
    <property type="entry name" value="Exopolyphosphatase"/>
</dbReference>
<dbReference type="InterPro" id="IPR050273">
    <property type="entry name" value="GppA/Ppx_hydrolase"/>
</dbReference>
<dbReference type="InterPro" id="IPR023709">
    <property type="entry name" value="Guo-5TP_3DP_PyrP"/>
</dbReference>
<dbReference type="InterPro" id="IPR048950">
    <property type="entry name" value="Ppx_GppA_C"/>
</dbReference>
<dbReference type="InterPro" id="IPR003695">
    <property type="entry name" value="Ppx_GppA_N"/>
</dbReference>
<dbReference type="InterPro" id="IPR030673">
    <property type="entry name" value="PyroPPase_GppA_Ppx"/>
</dbReference>
<dbReference type="NCBIfam" id="TIGR03706">
    <property type="entry name" value="exo_poly_only"/>
    <property type="match status" value="1"/>
</dbReference>
<dbReference type="NCBIfam" id="NF008260">
    <property type="entry name" value="PRK11031.1"/>
    <property type="match status" value="1"/>
</dbReference>
<dbReference type="PANTHER" id="PTHR30005">
    <property type="entry name" value="EXOPOLYPHOSPHATASE"/>
    <property type="match status" value="1"/>
</dbReference>
<dbReference type="PANTHER" id="PTHR30005:SF0">
    <property type="entry name" value="RETROGRADE REGULATION PROTEIN 2"/>
    <property type="match status" value="1"/>
</dbReference>
<dbReference type="Pfam" id="PF02541">
    <property type="entry name" value="Ppx-GppA"/>
    <property type="match status" value="1"/>
</dbReference>
<dbReference type="Pfam" id="PF21447">
    <property type="entry name" value="Ppx-GppA_III"/>
    <property type="match status" value="1"/>
</dbReference>
<dbReference type="PIRSF" id="PIRSF001267">
    <property type="entry name" value="Pyrophosphatase_GppA_Ppx"/>
    <property type="match status" value="1"/>
</dbReference>
<dbReference type="SUPFAM" id="SSF53067">
    <property type="entry name" value="Actin-like ATPase domain"/>
    <property type="match status" value="2"/>
</dbReference>
<dbReference type="SUPFAM" id="SSF109604">
    <property type="entry name" value="HD-domain/PDEase-like"/>
    <property type="match status" value="1"/>
</dbReference>
<proteinExistence type="inferred from homology"/>
<sequence>MRSASSLYAAIDLGSNSFHMLVVREVAGSIQTIARIKRKVRLAAGLDADNNLSAEAMDRGWQCLRLFSEQLQDIPPEQIRVVATATLRIAANAGSFLAQAQKLLGCPVNVISGEEEARLIYQGVSHTTGGSDKRLVVDIGGGSTELVTGRGSQPTTLYSLSMGCVTWLERYFSDRQLGKVNFEQAEQAARAMIRPIADSLKAQGWQVCVGASGTVQALQEIMMAQGMDERITLNKLQQLKQRAIECGKLEELEIEGLTLERALVFPSGLSILIAIFSELNISSMTLAGGALREGLLYGMLPLPVDRDIRSRTLHDVQRRFSVDPEQAERVRQLADSFARQVSLQWKLDDRSRELLGSACLLHEIGLSVDFRQAPQHAAYLVRYLDLPGFTPAQKKLLATLLQNQVGNIDLPLLSQQNALLPRIAERLSRLLRLAIIFASRRRDDRLPAVRLQADDDNLTVTLPSGWLEAHPLRAELLEQEARWQGYVHWPLIIA</sequence>
<gene>
    <name evidence="1" type="primary">gppA</name>
    <name type="ordered locus">ETA_01930</name>
</gene>
<name>GPPA_ERWT9</name>
<accession>B2VG72</accession>